<gene>
    <name type="primary">Tmem209</name>
</gene>
<evidence type="ECO:0000250" key="1">
    <source>
        <dbReference type="UniProtKB" id="Q96SK2"/>
    </source>
</evidence>
<evidence type="ECO:0000255" key="2"/>
<evidence type="ECO:0000256" key="3">
    <source>
        <dbReference type="SAM" id="MobiDB-lite"/>
    </source>
</evidence>
<evidence type="ECO:0000305" key="4"/>
<organism>
    <name type="scientific">Rattus norvegicus</name>
    <name type="common">Rat</name>
    <dbReference type="NCBI Taxonomy" id="10116"/>
    <lineage>
        <taxon>Eukaryota</taxon>
        <taxon>Metazoa</taxon>
        <taxon>Chordata</taxon>
        <taxon>Craniata</taxon>
        <taxon>Vertebrata</taxon>
        <taxon>Euteleostomi</taxon>
        <taxon>Mammalia</taxon>
        <taxon>Eutheria</taxon>
        <taxon>Euarchontoglires</taxon>
        <taxon>Glires</taxon>
        <taxon>Rodentia</taxon>
        <taxon>Myomorpha</taxon>
        <taxon>Muroidea</taxon>
        <taxon>Muridae</taxon>
        <taxon>Murinae</taxon>
        <taxon>Rattus</taxon>
    </lineage>
</organism>
<protein>
    <recommendedName>
        <fullName>Transmembrane protein 209</fullName>
    </recommendedName>
</protein>
<reference key="1">
    <citation type="journal article" date="2004" name="Genome Res.">
        <title>The status, quality, and expansion of the NIH full-length cDNA project: the Mammalian Gene Collection (MGC).</title>
        <authorList>
            <consortium name="The MGC Project Team"/>
        </authorList>
    </citation>
    <scope>NUCLEOTIDE SEQUENCE [LARGE SCALE MRNA]</scope>
    <source>
        <tissue>Testis</tissue>
    </source>
</reference>
<proteinExistence type="evidence at transcript level"/>
<keyword id="KW-0963">Cytoplasm</keyword>
<keyword id="KW-0325">Glycoprotein</keyword>
<keyword id="KW-0333">Golgi apparatus</keyword>
<keyword id="KW-0472">Membrane</keyword>
<keyword id="KW-0539">Nucleus</keyword>
<keyword id="KW-0597">Phosphoprotein</keyword>
<keyword id="KW-1185">Reference proteome</keyword>
<keyword id="KW-0812">Transmembrane</keyword>
<keyword id="KW-1133">Transmembrane helix</keyword>
<feature type="chain" id="PRO_0000331634" description="Transmembrane protein 209">
    <location>
        <begin position="1"/>
        <end position="561"/>
    </location>
</feature>
<feature type="transmembrane region" description="Helical" evidence="2">
    <location>
        <begin position="28"/>
        <end position="48"/>
    </location>
</feature>
<feature type="transmembrane region" description="Helical" evidence="2">
    <location>
        <begin position="60"/>
        <end position="80"/>
    </location>
</feature>
<feature type="region of interest" description="Disordered" evidence="3">
    <location>
        <begin position="120"/>
        <end position="156"/>
    </location>
</feature>
<feature type="region of interest" description="Disordered" evidence="3">
    <location>
        <begin position="196"/>
        <end position="233"/>
    </location>
</feature>
<feature type="region of interest" description="Disordered" evidence="3">
    <location>
        <begin position="250"/>
        <end position="270"/>
    </location>
</feature>
<feature type="compositionally biased region" description="Low complexity" evidence="3">
    <location>
        <begin position="138"/>
        <end position="152"/>
    </location>
</feature>
<feature type="compositionally biased region" description="Low complexity" evidence="3">
    <location>
        <begin position="260"/>
        <end position="270"/>
    </location>
</feature>
<feature type="modified residue" description="Phosphoserine" evidence="1">
    <location>
        <position position="9"/>
    </location>
</feature>
<feature type="modified residue" description="Phosphoserine" evidence="1">
    <location>
        <position position="11"/>
    </location>
</feature>
<feature type="modified residue" description="Phosphoserine" evidence="1">
    <location>
        <position position="98"/>
    </location>
</feature>
<feature type="modified residue" description="Phosphoserine" evidence="1">
    <location>
        <position position="201"/>
    </location>
</feature>
<feature type="modified residue" description="Phosphoserine" evidence="1">
    <location>
        <position position="248"/>
    </location>
</feature>
<feature type="modified residue" description="Phosphoserine" evidence="1">
    <location>
        <position position="278"/>
    </location>
</feature>
<feature type="glycosylation site" description="N-linked (GlcNAc...) asparagine" evidence="2">
    <location>
        <position position="57"/>
    </location>
</feature>
<feature type="glycosylation site" description="N-linked (GlcNAc...) asparagine" evidence="2">
    <location>
        <position position="274"/>
    </location>
</feature>
<dbReference type="EMBL" id="BC079399">
    <property type="protein sequence ID" value="AAH79399.1"/>
    <property type="molecule type" value="mRNA"/>
</dbReference>
<dbReference type="RefSeq" id="NP_001014077.1">
    <property type="nucleotide sequence ID" value="NM_001014055.2"/>
</dbReference>
<dbReference type="FunCoup" id="Q68FR5">
    <property type="interactions" value="3241"/>
</dbReference>
<dbReference type="STRING" id="10116.ENSRNOP00000031535"/>
<dbReference type="GlyCosmos" id="Q68FR5">
    <property type="glycosylation" value="2 sites, No reported glycans"/>
</dbReference>
<dbReference type="GlyGen" id="Q68FR5">
    <property type="glycosylation" value="2 sites"/>
</dbReference>
<dbReference type="PhosphoSitePlus" id="Q68FR5"/>
<dbReference type="PaxDb" id="10116-ENSRNOP00000031535"/>
<dbReference type="GeneID" id="312200"/>
<dbReference type="KEGG" id="rno:312200"/>
<dbReference type="UCSC" id="RGD:1309682">
    <property type="organism name" value="rat"/>
</dbReference>
<dbReference type="AGR" id="RGD:1309682"/>
<dbReference type="CTD" id="84928"/>
<dbReference type="RGD" id="1309682">
    <property type="gene designation" value="Tmem209"/>
</dbReference>
<dbReference type="VEuPathDB" id="HostDB:ENSRNOG00000028219"/>
<dbReference type="eggNOG" id="KOG4670">
    <property type="taxonomic scope" value="Eukaryota"/>
</dbReference>
<dbReference type="InParanoid" id="Q68FR5"/>
<dbReference type="OrthoDB" id="50469at9989"/>
<dbReference type="PhylomeDB" id="Q68FR5"/>
<dbReference type="TreeFam" id="TF320043"/>
<dbReference type="PRO" id="PR:Q68FR5"/>
<dbReference type="Proteomes" id="UP000002494">
    <property type="component" value="Chromosome 4"/>
</dbReference>
<dbReference type="Bgee" id="ENSRNOG00000028219">
    <property type="expression patterns" value="Expressed in testis and 19 other cell types or tissues"/>
</dbReference>
<dbReference type="ExpressionAtlas" id="Q68FR5">
    <property type="expression patterns" value="baseline and differential"/>
</dbReference>
<dbReference type="GO" id="GO:0005794">
    <property type="term" value="C:Golgi apparatus"/>
    <property type="evidence" value="ECO:0007669"/>
    <property type="project" value="UniProtKB-SubCell"/>
</dbReference>
<dbReference type="GO" id="GO:0016020">
    <property type="term" value="C:membrane"/>
    <property type="evidence" value="ECO:0000318"/>
    <property type="project" value="GO_Central"/>
</dbReference>
<dbReference type="GO" id="GO:0005635">
    <property type="term" value="C:nuclear envelope"/>
    <property type="evidence" value="ECO:0007669"/>
    <property type="project" value="UniProtKB-SubCell"/>
</dbReference>
<dbReference type="InterPro" id="IPR019176">
    <property type="entry name" value="Cytochrome_B561-rel"/>
</dbReference>
<dbReference type="PANTHER" id="PTHR21780">
    <property type="entry name" value="TRANSMEMBRANE PROTEIN 209"/>
    <property type="match status" value="1"/>
</dbReference>
<dbReference type="PANTHER" id="PTHR21780:SF0">
    <property type="entry name" value="TRANSMEMBRANE PROTEIN 209"/>
    <property type="match status" value="1"/>
</dbReference>
<dbReference type="Pfam" id="PF09786">
    <property type="entry name" value="CytochromB561_N"/>
    <property type="match status" value="1"/>
</dbReference>
<accession>Q68FR5</accession>
<name>TM209_RAT</name>
<comment type="function">
    <text evidence="1">Nuclear envelope protein which in association with NUP205, may be involved in nuclear transport of various nuclear proteins in addition to MYC.</text>
</comment>
<comment type="subunit">
    <text evidence="1">Interacts with NUP205.</text>
</comment>
<comment type="subcellular location">
    <subcellularLocation>
        <location evidence="4">Membrane</location>
        <topology evidence="2">Multi-pass membrane protein</topology>
    </subcellularLocation>
    <subcellularLocation>
        <location evidence="1">Nucleus envelope</location>
    </subcellularLocation>
    <subcellularLocation>
        <location evidence="1">Golgi apparatus</location>
    </subcellularLocation>
    <subcellularLocation>
        <location evidence="1">Cytoplasm</location>
    </subcellularLocation>
    <text evidence="1">Weakly expressed in the cytoplasm.</text>
</comment>
<sequence>MMQGEVSPSPSLIDRTIRMRKETESRKVVLAWGLLNVSMAGMIYTEMTGKLISTYYNVTYWPLWYIELALASLFSLNALFDFWRYFKYTVAPTSLVVSPGQQTLLGLKPAVVQTTPPRDLAATQISPSPPSPSIQGQSVLSYSPSRSPSTSPKFATSCMTGYSPQLQGLSSGGLGSYSPAVTYSPVSGYSKLASFSLSPSSPYPTTVGPVESSGLRARYRSPPTAYNSPTDKEDYMTDLRTLDTFLRSEEEKQHRVKLGSPDSTSPSTSPTFWNYSRSVGDYAQTLKKFQYQLACRSQAPCANKDEADLISKQAAEEVWARVTMNRQLLDHMDSWTAKFRNWISETILVPLVQEIESVSTQMRRMGCPELQIGEASVTSLKQAALVKAPLIPTLNAIVQYLDLTPNQEYLFERIKELSQGGCMSSFRWNRGGDFKGRRWDTDLPTDSAIIMHVFCTYLDSRLPPHPKYPDGKTFTSQHFVQTPNKPDVTNENVFCVYQSAINPPHYELIYQRHVYSLPKGRNNMFHTLLMFLYIIKTKESGMLGRVNLGLSGVNILWIFGE</sequence>